<gene>
    <name type="primary">Slc36a3</name>
    <name type="synonym">Pat3</name>
    <name type="synonym">Tramd2</name>
</gene>
<accession>Q811P0</accession>
<accession>Q8CH37</accession>
<reference key="1">
    <citation type="journal article" date="2003" name="Genomics">
        <title>A cluster of proton/amino acid transporter genes in the human and mouse genomes.</title>
        <authorList>
            <person name="Boll M."/>
            <person name="Foltz M."/>
            <person name="Rubio-Aliaga I."/>
            <person name="Daniel H."/>
        </authorList>
    </citation>
    <scope>NUCLEOTIDE SEQUENCE [MRNA]</scope>
    <scope>TISSUE SPECIFICITY</scope>
    <source>
        <strain>C57BL/6J</strain>
    </source>
</reference>
<reference key="2">
    <citation type="journal article" date="2004" name="Mamm. Genome">
        <title>Organization and expression of the SLC36 cluster of amino acid transporter genes.</title>
        <authorList>
            <person name="Bermingham J.R. Jr."/>
            <person name="Pennington J."/>
        </authorList>
    </citation>
    <scope>NUCLEOTIDE SEQUENCE [MRNA]</scope>
    <scope>TISSUE SPECIFICITY</scope>
</reference>
<reference key="3">
    <citation type="journal article" date="2009" name="PLoS Biol.">
        <title>Lineage-specific biology revealed by a finished genome assembly of the mouse.</title>
        <authorList>
            <person name="Church D.M."/>
            <person name="Goodstadt L."/>
            <person name="Hillier L.W."/>
            <person name="Zody M.C."/>
            <person name="Goldstein S."/>
            <person name="She X."/>
            <person name="Bult C.J."/>
            <person name="Agarwala R."/>
            <person name="Cherry J.L."/>
            <person name="DiCuccio M."/>
            <person name="Hlavina W."/>
            <person name="Kapustin Y."/>
            <person name="Meric P."/>
            <person name="Maglott D."/>
            <person name="Birtle Z."/>
            <person name="Marques A.C."/>
            <person name="Graves T."/>
            <person name="Zhou S."/>
            <person name="Teague B."/>
            <person name="Potamousis K."/>
            <person name="Churas C."/>
            <person name="Place M."/>
            <person name="Herschleb J."/>
            <person name="Runnheim R."/>
            <person name="Forrest D."/>
            <person name="Amos-Landgraf J."/>
            <person name="Schwartz D.C."/>
            <person name="Cheng Z."/>
            <person name="Lindblad-Toh K."/>
            <person name="Eichler E.E."/>
            <person name="Ponting C.P."/>
        </authorList>
    </citation>
    <scope>NUCLEOTIDE SEQUENCE [LARGE SCALE GENOMIC DNA]</scope>
    <source>
        <strain>C57BL/6J</strain>
    </source>
</reference>
<proteinExistence type="evidence at transcript level"/>
<dbReference type="EMBL" id="AF453745">
    <property type="protein sequence ID" value="AAN76273.1"/>
    <property type="molecule type" value="mRNA"/>
</dbReference>
<dbReference type="EMBL" id="AY211261">
    <property type="protein sequence ID" value="AAO37089.1"/>
    <property type="molecule type" value="mRNA"/>
</dbReference>
<dbReference type="EMBL" id="AL713870">
    <property type="status" value="NOT_ANNOTATED_CDS"/>
    <property type="molecule type" value="Genomic_DNA"/>
</dbReference>
<dbReference type="EMBL" id="AL772357">
    <property type="status" value="NOT_ANNOTATED_CDS"/>
    <property type="molecule type" value="Genomic_DNA"/>
</dbReference>
<dbReference type="CCDS" id="CCDS24708.1"/>
<dbReference type="RefSeq" id="NP_758462.2">
    <property type="nucleotide sequence ID" value="NM_172258.4"/>
</dbReference>
<dbReference type="RefSeq" id="XP_006532892.1">
    <property type="nucleotide sequence ID" value="XM_006532829.4"/>
</dbReference>
<dbReference type="FunCoup" id="Q811P0">
    <property type="interactions" value="321"/>
</dbReference>
<dbReference type="STRING" id="10090.ENSMUSP00000020502"/>
<dbReference type="iPTMnet" id="Q811P0"/>
<dbReference type="PhosphoSitePlus" id="Q811P0"/>
<dbReference type="SwissPalm" id="Q811P0"/>
<dbReference type="PaxDb" id="10090-ENSMUSP00000020502"/>
<dbReference type="ProteomicsDB" id="256890"/>
<dbReference type="Antibodypedia" id="28190">
    <property type="antibodies" value="46 antibodies from 13 providers"/>
</dbReference>
<dbReference type="DNASU" id="215332"/>
<dbReference type="Ensembl" id="ENSMUST00000020502.9">
    <property type="protein sequence ID" value="ENSMUSP00000020502.3"/>
    <property type="gene ID" value="ENSMUSG00000049491.16"/>
</dbReference>
<dbReference type="GeneID" id="215332"/>
<dbReference type="KEGG" id="mmu:215332"/>
<dbReference type="UCSC" id="uc007iyx.1">
    <property type="organism name" value="mouse"/>
</dbReference>
<dbReference type="AGR" id="MGI:2665001"/>
<dbReference type="CTD" id="285641"/>
<dbReference type="MGI" id="MGI:2665001">
    <property type="gene designation" value="Slc36a3"/>
</dbReference>
<dbReference type="VEuPathDB" id="HostDB:ENSMUSG00000049491"/>
<dbReference type="eggNOG" id="KOG1304">
    <property type="taxonomic scope" value="Eukaryota"/>
</dbReference>
<dbReference type="GeneTree" id="ENSGT00940000162406"/>
<dbReference type="HOGENOM" id="CLU_009646_0_2_1"/>
<dbReference type="InParanoid" id="Q811P0"/>
<dbReference type="OMA" id="NQMKNPQ"/>
<dbReference type="OrthoDB" id="1684102at2759"/>
<dbReference type="PhylomeDB" id="Q811P0"/>
<dbReference type="TreeFam" id="TF314873"/>
<dbReference type="BioGRID-ORCS" id="215332">
    <property type="hits" value="2 hits in 43 CRISPR screens"/>
</dbReference>
<dbReference type="ChiTaRS" id="Slc36a3">
    <property type="organism name" value="mouse"/>
</dbReference>
<dbReference type="PRO" id="PR:Q811P0"/>
<dbReference type="Proteomes" id="UP000000589">
    <property type="component" value="Chromosome 11"/>
</dbReference>
<dbReference type="RNAct" id="Q811P0">
    <property type="molecule type" value="protein"/>
</dbReference>
<dbReference type="Bgee" id="ENSMUSG00000049491">
    <property type="expression patterns" value="Expressed in seminiferous tubule of testis and 11 other cell types or tissues"/>
</dbReference>
<dbReference type="ExpressionAtlas" id="Q811P0">
    <property type="expression patterns" value="baseline and differential"/>
</dbReference>
<dbReference type="GO" id="GO:0016020">
    <property type="term" value="C:membrane"/>
    <property type="evidence" value="ECO:0007669"/>
    <property type="project" value="UniProtKB-SubCell"/>
</dbReference>
<dbReference type="InterPro" id="IPR013057">
    <property type="entry name" value="AA_transpt_TM"/>
</dbReference>
<dbReference type="PANTHER" id="PTHR22950">
    <property type="entry name" value="AMINO ACID TRANSPORTER"/>
    <property type="match status" value="1"/>
</dbReference>
<dbReference type="PANTHER" id="PTHR22950:SF258">
    <property type="entry name" value="PROTON-COUPLED AMINO ACID TRANSPORTER 3"/>
    <property type="match status" value="1"/>
</dbReference>
<dbReference type="Pfam" id="PF01490">
    <property type="entry name" value="Aa_trans"/>
    <property type="match status" value="1"/>
</dbReference>
<feature type="chain" id="PRO_0000326205" description="Proton-coupled amino acid transporter 3">
    <location>
        <begin position="1"/>
        <end position="477"/>
    </location>
</feature>
<feature type="topological domain" description="Cytoplasmic" evidence="1">
    <location>
        <begin position="1"/>
        <end position="54"/>
    </location>
</feature>
<feature type="transmembrane region" description="Helical" evidence="1">
    <location>
        <begin position="55"/>
        <end position="75"/>
    </location>
</feature>
<feature type="topological domain" description="Extracellular" evidence="1">
    <location>
        <begin position="76"/>
        <end position="77"/>
    </location>
</feature>
<feature type="transmembrane region" description="Helical" evidence="1">
    <location>
        <begin position="78"/>
        <end position="98"/>
    </location>
</feature>
<feature type="topological domain" description="Cytoplasmic" evidence="1">
    <location>
        <begin position="99"/>
        <end position="144"/>
    </location>
</feature>
<feature type="transmembrane region" description="Helical" evidence="1">
    <location>
        <begin position="145"/>
        <end position="165"/>
    </location>
</feature>
<feature type="topological domain" description="Extracellular" evidence="1">
    <location>
        <begin position="166"/>
        <end position="202"/>
    </location>
</feature>
<feature type="transmembrane region" description="Helical" evidence="1">
    <location>
        <begin position="203"/>
        <end position="223"/>
    </location>
</feature>
<feature type="topological domain" description="Cytoplasmic" evidence="1">
    <location>
        <begin position="224"/>
        <end position="225"/>
    </location>
</feature>
<feature type="transmembrane region" description="Helical" evidence="1">
    <location>
        <begin position="226"/>
        <end position="246"/>
    </location>
</feature>
<feature type="topological domain" description="Extracellular" evidence="1">
    <location>
        <begin position="247"/>
        <end position="259"/>
    </location>
</feature>
<feature type="transmembrane region" description="Helical" evidence="1">
    <location>
        <begin position="260"/>
        <end position="280"/>
    </location>
</feature>
<feature type="topological domain" description="Cytoplasmic" evidence="1">
    <location>
        <begin position="281"/>
        <end position="291"/>
    </location>
</feature>
<feature type="transmembrane region" description="Helical" evidence="1">
    <location>
        <begin position="292"/>
        <end position="312"/>
    </location>
</feature>
<feature type="topological domain" description="Extracellular" evidence="1">
    <location>
        <begin position="313"/>
        <end position="344"/>
    </location>
</feature>
<feature type="transmembrane region" description="Helical" evidence="1">
    <location>
        <begin position="345"/>
        <end position="365"/>
    </location>
</feature>
<feature type="topological domain" description="Cytoplasmic" evidence="1">
    <location>
        <begin position="366"/>
        <end position="374"/>
    </location>
</feature>
<feature type="transmembrane region" description="Helical" evidence="1">
    <location>
        <begin position="375"/>
        <end position="395"/>
    </location>
</feature>
<feature type="topological domain" description="Extracellular" evidence="1">
    <location>
        <begin position="396"/>
        <end position="399"/>
    </location>
</feature>
<feature type="transmembrane region" description="Helical" evidence="1">
    <location>
        <begin position="400"/>
        <end position="420"/>
    </location>
</feature>
<feature type="topological domain" description="Cytoplasmic" evidence="1">
    <location>
        <begin position="421"/>
        <end position="432"/>
    </location>
</feature>
<feature type="transmembrane region" description="Helical" evidence="1">
    <location>
        <begin position="433"/>
        <end position="453"/>
    </location>
</feature>
<feature type="topological domain" description="Extracellular" evidence="1">
    <location>
        <begin position="454"/>
        <end position="477"/>
    </location>
</feature>
<feature type="region of interest" description="Disordered" evidence="2">
    <location>
        <begin position="19"/>
        <end position="43"/>
    </location>
</feature>
<feature type="compositionally biased region" description="Low complexity" evidence="2">
    <location>
        <begin position="19"/>
        <end position="40"/>
    </location>
</feature>
<feature type="sequence conflict" description="In Ref. 1; AAN76273." evidence="5" ref="1">
    <original>E</original>
    <variation>K</variation>
    <location>
        <position position="46"/>
    </location>
</feature>
<keyword id="KW-0472">Membrane</keyword>
<keyword id="KW-1185">Reference proteome</keyword>
<keyword id="KW-0812">Transmembrane</keyword>
<keyword id="KW-1133">Transmembrane helix</keyword>
<name>S36A3_MOUSE</name>
<comment type="subcellular location">
    <subcellularLocation>
        <location evidence="5">Membrane</location>
        <topology evidence="5">Multi-pass membrane protein</topology>
    </subcellularLocation>
</comment>
<comment type="tissue specificity">
    <text evidence="3 4">Specifically expressed in testis.</text>
</comment>
<comment type="similarity">
    <text evidence="5">Belongs to the amino acid/polyamine transporter 2 family.</text>
</comment>
<sequence>MGNVPLLREVGKCQRNMFGRSTASSKGSSNSRSSSSTSPKKGPRREADALMFIQIFIHLLKSNIGTGFLGLPLAVKNAGLLVGPVSLLAIGALTVHCMDILLNCACHLTQRLQRSFVNYEETTMYSLETCPSPWLRTHSVWGRYVVSFLLIVTQLGFCSVYFMFLADNLQQIMEEAHFTSNVCQPRQSLVMTSILDTRFYMLTILPFLILLVLIQNPQVLSIFSTLATITTLSSLALIFEYLIQTPHHSNLPLVANWKTFLLFFGTAIFTFEGVGMVLPLKSQMKSPQQFPAVLYLGMSFVIFLYICLGTLGYMKFGTDTQASITLNLPICWLYQSVKLMYSVGIFFTYALQFHVPAEIIVPYVVSRVSENWALFVDLTVRTALVCLTCFSAVLIPRLDLVISLVGSVSSSALAIIIPPLLEIATFYSENISCATIVKDIMISILGLLGCVLGTYQALYEMTQQTHFYMANSTRVHI</sequence>
<protein>
    <recommendedName>
        <fullName>Proton-coupled amino acid transporter 3</fullName>
        <shortName>Proton/amino acid transporter 3</shortName>
    </recommendedName>
    <alternativeName>
        <fullName>Solute carrier family 36 member 3</fullName>
    </alternativeName>
    <alternativeName>
        <fullName>Tramdorin-2</fullName>
    </alternativeName>
</protein>
<organism>
    <name type="scientific">Mus musculus</name>
    <name type="common">Mouse</name>
    <dbReference type="NCBI Taxonomy" id="10090"/>
    <lineage>
        <taxon>Eukaryota</taxon>
        <taxon>Metazoa</taxon>
        <taxon>Chordata</taxon>
        <taxon>Craniata</taxon>
        <taxon>Vertebrata</taxon>
        <taxon>Euteleostomi</taxon>
        <taxon>Mammalia</taxon>
        <taxon>Eutheria</taxon>
        <taxon>Euarchontoglires</taxon>
        <taxon>Glires</taxon>
        <taxon>Rodentia</taxon>
        <taxon>Myomorpha</taxon>
        <taxon>Muroidea</taxon>
        <taxon>Muridae</taxon>
        <taxon>Murinae</taxon>
        <taxon>Mus</taxon>
        <taxon>Mus</taxon>
    </lineage>
</organism>
<evidence type="ECO:0000255" key="1"/>
<evidence type="ECO:0000256" key="2">
    <source>
        <dbReference type="SAM" id="MobiDB-lite"/>
    </source>
</evidence>
<evidence type="ECO:0000269" key="3">
    <source>
    </source>
</evidence>
<evidence type="ECO:0000269" key="4">
    <source>
    </source>
</evidence>
<evidence type="ECO:0000305" key="5"/>